<name>GNAS_LYMST</name>
<dbReference type="EMBL" id="Z15096">
    <property type="protein sequence ID" value="CAA78808.1"/>
    <property type="molecule type" value="mRNA"/>
</dbReference>
<dbReference type="PIR" id="S27015">
    <property type="entry name" value="S27015"/>
</dbReference>
<dbReference type="SMR" id="P30684"/>
<dbReference type="GO" id="GO:0005737">
    <property type="term" value="C:cytoplasm"/>
    <property type="evidence" value="ECO:0007669"/>
    <property type="project" value="TreeGrafter"/>
</dbReference>
<dbReference type="GO" id="GO:0005834">
    <property type="term" value="C:heterotrimeric G-protein complex"/>
    <property type="evidence" value="ECO:0007669"/>
    <property type="project" value="TreeGrafter"/>
</dbReference>
<dbReference type="GO" id="GO:0001664">
    <property type="term" value="F:G protein-coupled receptor binding"/>
    <property type="evidence" value="ECO:0007669"/>
    <property type="project" value="TreeGrafter"/>
</dbReference>
<dbReference type="GO" id="GO:0031683">
    <property type="term" value="F:G-protein beta/gamma-subunit complex binding"/>
    <property type="evidence" value="ECO:0007669"/>
    <property type="project" value="InterPro"/>
</dbReference>
<dbReference type="GO" id="GO:0005525">
    <property type="term" value="F:GTP binding"/>
    <property type="evidence" value="ECO:0007669"/>
    <property type="project" value="UniProtKB-KW"/>
</dbReference>
<dbReference type="GO" id="GO:0003924">
    <property type="term" value="F:GTPase activity"/>
    <property type="evidence" value="ECO:0007669"/>
    <property type="project" value="InterPro"/>
</dbReference>
<dbReference type="GO" id="GO:0046872">
    <property type="term" value="F:metal ion binding"/>
    <property type="evidence" value="ECO:0007669"/>
    <property type="project" value="UniProtKB-KW"/>
</dbReference>
<dbReference type="GO" id="GO:0007191">
    <property type="term" value="P:adenylate cyclase-activating dopamine receptor signaling pathway"/>
    <property type="evidence" value="ECO:0007669"/>
    <property type="project" value="TreeGrafter"/>
</dbReference>
<dbReference type="GO" id="GO:0007606">
    <property type="term" value="P:sensory perception of chemical stimulus"/>
    <property type="evidence" value="ECO:0007669"/>
    <property type="project" value="TreeGrafter"/>
</dbReference>
<dbReference type="CDD" id="cd00066">
    <property type="entry name" value="G-alpha"/>
    <property type="match status" value="1"/>
</dbReference>
<dbReference type="FunFam" id="1.10.400.10:FF:000003">
    <property type="entry name" value="Guanine nucleotide-binding protein G(S) subunit alpha"/>
    <property type="match status" value="1"/>
</dbReference>
<dbReference type="FunFam" id="3.40.50.300:FF:006178">
    <property type="entry name" value="Guanine nucleotide-binding protein G(s) subunit alpha isoforms short"/>
    <property type="match status" value="1"/>
</dbReference>
<dbReference type="Gene3D" id="1.10.400.10">
    <property type="entry name" value="GI Alpha 1, domain 2-like"/>
    <property type="match status" value="1"/>
</dbReference>
<dbReference type="Gene3D" id="3.40.50.300">
    <property type="entry name" value="P-loop containing nucleotide triphosphate hydrolases"/>
    <property type="match status" value="1"/>
</dbReference>
<dbReference type="InterPro" id="IPR000367">
    <property type="entry name" value="Gprotein_alpha_S"/>
</dbReference>
<dbReference type="InterPro" id="IPR001019">
    <property type="entry name" value="Gprotein_alpha_su"/>
</dbReference>
<dbReference type="InterPro" id="IPR011025">
    <property type="entry name" value="GproteinA_insert"/>
</dbReference>
<dbReference type="InterPro" id="IPR027417">
    <property type="entry name" value="P-loop_NTPase"/>
</dbReference>
<dbReference type="PANTHER" id="PTHR10218:SF212">
    <property type="entry name" value="G PROTEIN ALPHA S SUBUNIT"/>
    <property type="match status" value="1"/>
</dbReference>
<dbReference type="PANTHER" id="PTHR10218">
    <property type="entry name" value="GTP-BINDING PROTEIN ALPHA SUBUNIT"/>
    <property type="match status" value="1"/>
</dbReference>
<dbReference type="Pfam" id="PF00503">
    <property type="entry name" value="G-alpha"/>
    <property type="match status" value="1"/>
</dbReference>
<dbReference type="PRINTS" id="PR00318">
    <property type="entry name" value="GPROTEINA"/>
</dbReference>
<dbReference type="PRINTS" id="PR00443">
    <property type="entry name" value="GPROTEINAS"/>
</dbReference>
<dbReference type="SMART" id="SM00275">
    <property type="entry name" value="G_alpha"/>
    <property type="match status" value="1"/>
</dbReference>
<dbReference type="SUPFAM" id="SSF52540">
    <property type="entry name" value="P-loop containing nucleoside triphosphate hydrolases"/>
    <property type="match status" value="1"/>
</dbReference>
<dbReference type="SUPFAM" id="SSF47895">
    <property type="entry name" value="Transducin (alpha subunit), insertion domain"/>
    <property type="match status" value="1"/>
</dbReference>
<dbReference type="PROSITE" id="PS51882">
    <property type="entry name" value="G_ALPHA"/>
    <property type="match status" value="1"/>
</dbReference>
<sequence length="376" mass="44099">MGCFRQTRDDEDDKLRKEANKKIEKQLAKDKLLYRGTHRLLLLGAGESGKSTIVKQMRILHVNGFSPEERKQKIEDIKRNVRDAILTITGAMSTLNPPVQLEHPQNKAKVDYIQDKASQAEFDYPPIFYEYTEILWKDKGVQAAFERSNEYQLIDCAQYFLDRVHIIRQAEYTPSEQDILRCRVLTSGIFETKFSVDKVNFHMFDVGGQRDERRKWIQCFNDVTAIIFVTACSGYNMVLREDATQNRLKESLDLFKSIWNNRWLRTISVILFLNKQDLLAEKVKAGKSKIEDYFPEYARYQVPPDASSEPGEDTEVVRAKYFIRDEFLRISTASGDGRHYCYPHFTCAVDTENIRRVFDDCRDIIQRMHLRQYELL</sequence>
<keyword id="KW-0342">GTP-binding</keyword>
<keyword id="KW-0449">Lipoprotein</keyword>
<keyword id="KW-0460">Magnesium</keyword>
<keyword id="KW-0479">Metal-binding</keyword>
<keyword id="KW-0547">Nucleotide-binding</keyword>
<keyword id="KW-0564">Palmitate</keyword>
<keyword id="KW-0807">Transducer</keyword>
<accession>P30684</accession>
<evidence type="ECO:0000250" key="1"/>
<evidence type="ECO:0000255" key="2">
    <source>
        <dbReference type="PROSITE-ProRule" id="PRU01230"/>
    </source>
</evidence>
<evidence type="ECO:0000305" key="3"/>
<protein>
    <recommendedName>
        <fullName>Guanine nucleotide-binding protein G(s) subunit alpha</fullName>
    </recommendedName>
    <alternativeName>
        <fullName>Adenylate cyclase-stimulating G alpha protein</fullName>
    </alternativeName>
</protein>
<feature type="initiator methionine" description="Removed" evidence="1">
    <location>
        <position position="1"/>
    </location>
</feature>
<feature type="chain" id="PRO_0000203728" description="Guanine nucleotide-binding protein G(s) subunit alpha">
    <location>
        <begin position="2"/>
        <end position="376"/>
    </location>
</feature>
<feature type="domain" description="G-alpha" evidence="2">
    <location>
        <begin position="36"/>
        <end position="376"/>
    </location>
</feature>
<feature type="region of interest" description="G1 motif" evidence="2">
    <location>
        <begin position="39"/>
        <end position="52"/>
    </location>
</feature>
<feature type="region of interest" description="G2 motif" evidence="2">
    <location>
        <begin position="178"/>
        <end position="186"/>
    </location>
</feature>
<feature type="region of interest" description="G3 motif" evidence="2">
    <location>
        <begin position="201"/>
        <end position="210"/>
    </location>
</feature>
<feature type="region of interest" description="G4 motif" evidence="2">
    <location>
        <begin position="270"/>
        <end position="277"/>
    </location>
</feature>
<feature type="region of interest" description="G5 motif" evidence="2">
    <location>
        <begin position="346"/>
        <end position="351"/>
    </location>
</feature>
<feature type="binding site" evidence="1">
    <location>
        <begin position="44"/>
        <end position="51"/>
    </location>
    <ligand>
        <name>GTP</name>
        <dbReference type="ChEBI" id="CHEBI:37565"/>
    </ligand>
</feature>
<feature type="binding site" evidence="1">
    <location>
        <position position="51"/>
    </location>
    <ligand>
        <name>Mg(2+)</name>
        <dbReference type="ChEBI" id="CHEBI:18420"/>
    </ligand>
</feature>
<feature type="binding site" evidence="1">
    <location>
        <begin position="180"/>
        <end position="186"/>
    </location>
    <ligand>
        <name>GTP</name>
        <dbReference type="ChEBI" id="CHEBI:37565"/>
    </ligand>
</feature>
<feature type="binding site" evidence="1">
    <location>
        <position position="186"/>
    </location>
    <ligand>
        <name>Mg(2+)</name>
        <dbReference type="ChEBI" id="CHEBI:18420"/>
    </ligand>
</feature>
<feature type="binding site" evidence="1">
    <location>
        <begin position="205"/>
        <end position="209"/>
    </location>
    <ligand>
        <name>GTP</name>
        <dbReference type="ChEBI" id="CHEBI:37565"/>
    </ligand>
</feature>
<feature type="binding site" evidence="1">
    <location>
        <begin position="274"/>
        <end position="277"/>
    </location>
    <ligand>
        <name>GTP</name>
        <dbReference type="ChEBI" id="CHEBI:37565"/>
    </ligand>
</feature>
<feature type="binding site" evidence="1">
    <location>
        <position position="348"/>
    </location>
    <ligand>
        <name>GTP</name>
        <dbReference type="ChEBI" id="CHEBI:37565"/>
    </ligand>
</feature>
<feature type="lipid moiety-binding region" description="N-palmitoyl glycine" evidence="1">
    <location>
        <position position="2"/>
    </location>
</feature>
<feature type="lipid moiety-binding region" description="S-palmitoyl cysteine" evidence="1">
    <location>
        <position position="3"/>
    </location>
</feature>
<organism>
    <name type="scientific">Lymnaea stagnalis</name>
    <name type="common">Great pond snail</name>
    <name type="synonym">Helix stagnalis</name>
    <dbReference type="NCBI Taxonomy" id="6523"/>
    <lineage>
        <taxon>Eukaryota</taxon>
        <taxon>Metazoa</taxon>
        <taxon>Spiralia</taxon>
        <taxon>Lophotrochozoa</taxon>
        <taxon>Mollusca</taxon>
        <taxon>Gastropoda</taxon>
        <taxon>Heterobranchia</taxon>
        <taxon>Euthyneura</taxon>
        <taxon>Panpulmonata</taxon>
        <taxon>Hygrophila</taxon>
        <taxon>Lymnaeoidea</taxon>
        <taxon>Lymnaeidae</taxon>
        <taxon>Lymnaea</taxon>
    </lineage>
</organism>
<proteinExistence type="evidence at transcript level"/>
<reference key="1">
    <citation type="journal article" date="1992" name="FEBS Lett.">
        <title>Molecular cloning of G protein alpha subunits from the central nervous system of the mollusc Lymnaea stagnalis.</title>
        <authorList>
            <person name="Knol J.C."/>
            <person name="Weidemann W."/>
            <person name="Planta R.J."/>
            <person name="Vreugdenhil E."/>
            <person name="van Heerikhuizen H."/>
        </authorList>
    </citation>
    <scope>NUCLEOTIDE SEQUENCE [MRNA]</scope>
    <source>
        <tissue>CNS</tissue>
    </source>
</reference>
<comment type="function">
    <text>Guanine nucleotide-binding proteins (G proteins) are involved as modulators or transducers in various transmembrane signaling systems. The G(s) protein is involved in hormonal regulation of adenylate cyclase: it activates the cyclase in response to beta-adrenergic stimuli.</text>
</comment>
<comment type="subunit">
    <text>G proteins are composed of 3 units; alpha, beta and gamma. The alpha chain contains the guanine nucleotide binding site.</text>
</comment>
<comment type="similarity">
    <text evidence="3">Belongs to the G-alpha family. G(s) subfamily.</text>
</comment>